<protein>
    <recommendedName>
        <fullName>ADP-ribosylation factor 1</fullName>
        <ecNumber evidence="1">3.6.5.2</ecNumber>
    </recommendedName>
</protein>
<gene>
    <name type="primary">ARF1</name>
    <name type="ordered locus">YDL192W</name>
    <name type="ORF">D1244</name>
</gene>
<comment type="function">
    <text evidence="4 9">GTP-binding protein involved in Golgi vesicle trafficking (PubMed:15356266, PubMed:34830155). May modulate vesicle budding and uncoating within the Golgi apparatus (PubMed:15356266). May recruit the lipid transfer protein VPS13 to Golgi membranes (PubMed:34830155). Recruits polyadenylate-binding protein PAB1 to COPI vesicles, and this is required for correct localization of the asymmetrically distributed ASH1 mRNA (PubMed:15356266).</text>
</comment>
<comment type="catalytic activity">
    <reaction evidence="1">
        <text>GTP + H2O = GDP + phosphate + H(+)</text>
        <dbReference type="Rhea" id="RHEA:19669"/>
        <dbReference type="ChEBI" id="CHEBI:15377"/>
        <dbReference type="ChEBI" id="CHEBI:15378"/>
        <dbReference type="ChEBI" id="CHEBI:37565"/>
        <dbReference type="ChEBI" id="CHEBI:43474"/>
        <dbReference type="ChEBI" id="CHEBI:58189"/>
        <dbReference type="EC" id="3.6.5.2"/>
    </reaction>
</comment>
<comment type="subunit">
    <text evidence="4 5 7 8 9">Interacts with RUD3 (PubMed:15356266, PubMed:15504911, PubMed:19141284, PubMed:20601958). Interacts with VPS13 (via C-terminal part); the interaction is direct (PubMed:34830155).</text>
</comment>
<comment type="interaction">
    <interactant intactId="EBI-2816">
        <id>P11076</id>
    </interactant>
    <interactant intactId="EBI-2820">
        <id>P19146</id>
        <label>ARF2</label>
    </interactant>
    <organismsDiffer>false</organismsDiffer>
    <experiments>5</experiments>
</comment>
<comment type="interaction">
    <interactant intactId="EBI-2816">
        <id>P11076</id>
    </interactant>
    <interactant intactId="EBI-27508">
        <id>Q05029</id>
        <label>BCH1</label>
    </interactant>
    <organismsDiffer>false</organismsDiffer>
    <experiments>3</experiments>
</comment>
<comment type="interaction">
    <interactant intactId="EBI-2816">
        <id>P11076</id>
    </interactant>
    <interactant intactId="EBI-26374">
        <id>P36122</id>
        <label>BCH2</label>
    </interactant>
    <organismsDiffer>false</organismsDiffer>
    <experiments>2</experiments>
</comment>
<comment type="interaction">
    <interactant intactId="EBI-2816">
        <id>P11076</id>
    </interactant>
    <interactant intactId="EBI-32770">
        <id>Q08754</id>
        <label>BUD7</label>
    </interactant>
    <organismsDiffer>false</organismsDiffer>
    <experiments>2</experiments>
</comment>
<comment type="interaction">
    <interactant intactId="EBI-2816">
        <id>P11076</id>
    </interactant>
    <interactant intactId="EBI-4640">
        <id>Q12114</id>
        <label>CHS5</label>
    </interactant>
    <organismsDiffer>false</organismsDiffer>
    <experiments>5</experiments>
</comment>
<comment type="interaction">
    <interactant intactId="EBI-2816">
        <id>P11076</id>
    </interactant>
    <interactant intactId="EBI-4649">
        <id>P40955</id>
        <label>CHS6</label>
    </interactant>
    <organismsDiffer>false</organismsDiffer>
    <experiments>3</experiments>
</comment>
<comment type="interaction">
    <interactant intactId="EBI-2816">
        <id>P11076</id>
    </interactant>
    <interactant intactId="EBI-14344">
        <id>P41909</id>
        <label>PXA1</label>
    </interactant>
    <organismsDiffer>false</organismsDiffer>
    <experiments>2</experiments>
</comment>
<comment type="interaction">
    <interactant intactId="EBI-2816">
        <id>P11076</id>
    </interactant>
    <interactant intactId="EBI-2464632">
        <id>P34230</id>
        <label>PXA2</label>
    </interactant>
    <organismsDiffer>false</organismsDiffer>
    <experiments>2</experiments>
</comment>
<comment type="interaction">
    <interactant intactId="EBI-2816">
        <id>P11076</id>
    </interactant>
    <interactant intactId="EBI-31697">
        <id>Q12234</id>
        <label>RUD3</label>
    </interactant>
    <organismsDiffer>false</organismsDiffer>
    <experiments>5</experiments>
</comment>
<comment type="subcellular location">
    <subcellularLocation>
        <location evidence="5">Golgi apparatus</location>
    </subcellularLocation>
</comment>
<comment type="disruption phenotype">
    <text evidence="2 6">Increases phosphatidylserine levels in the outer leaflet of the cell membrane (PubMed:16956384). Simultaneous knockout of DRS2 results in inviability (PubMed:10601336).</text>
</comment>
<comment type="miscellaneous">
    <text evidence="3">Present with 19300 molecules/cell in log phase SD medium.</text>
</comment>
<comment type="similarity">
    <text evidence="10">Belongs to the small GTPase superfamily. Arf family.</text>
</comment>
<name>ARF1_YEAST</name>
<dbReference type="EC" id="3.6.5.2" evidence="1"/>
<dbReference type="EMBL" id="J03276">
    <property type="protein sequence ID" value="AAA34431.1"/>
    <property type="molecule type" value="Genomic_DNA"/>
</dbReference>
<dbReference type="EMBL" id="X83276">
    <property type="protein sequence ID" value="CAA58255.1"/>
    <property type="molecule type" value="Genomic_DNA"/>
</dbReference>
<dbReference type="EMBL" id="Z74240">
    <property type="protein sequence ID" value="CAA98769.1"/>
    <property type="molecule type" value="Genomic_DNA"/>
</dbReference>
<dbReference type="EMBL" id="BK006938">
    <property type="protein sequence ID" value="DAA11671.1"/>
    <property type="molecule type" value="Genomic_DNA"/>
</dbReference>
<dbReference type="PIR" id="B36167">
    <property type="entry name" value="B36167"/>
</dbReference>
<dbReference type="RefSeq" id="NP_010089.1">
    <property type="nucleotide sequence ID" value="NM_001180252.1"/>
</dbReference>
<dbReference type="PDB" id="2K5U">
    <property type="method" value="NMR"/>
    <property type="chains" value="A=2-181"/>
</dbReference>
<dbReference type="PDB" id="2KSQ">
    <property type="method" value="NMR"/>
    <property type="chains" value="A=2-181"/>
</dbReference>
<dbReference type="PDB" id="3TJZ">
    <property type="method" value="X-ray"/>
    <property type="resolution" value="2.90 A"/>
    <property type="chains" value="A/D=18-181"/>
</dbReference>
<dbReference type="PDB" id="4Q66">
    <property type="method" value="X-ray"/>
    <property type="resolution" value="3.35 A"/>
    <property type="chains" value="C/F/I/L=18-181"/>
</dbReference>
<dbReference type="PDB" id="5A1U">
    <property type="method" value="EM"/>
    <property type="resolution" value="13.00 A"/>
    <property type="chains" value="A/B=1-181"/>
</dbReference>
<dbReference type="PDB" id="5A1V">
    <property type="method" value="EM"/>
    <property type="resolution" value="21.00 A"/>
    <property type="chains" value="A/B/I/J/R/S=1-181"/>
</dbReference>
<dbReference type="PDB" id="5A1W">
    <property type="method" value="EM"/>
    <property type="resolution" value="18.00 A"/>
    <property type="chains" value="A/B=1-181"/>
</dbReference>
<dbReference type="PDB" id="5A1X">
    <property type="method" value="EM"/>
    <property type="resolution" value="23.00 A"/>
    <property type="chains" value="A/B/I/J=1-181"/>
</dbReference>
<dbReference type="PDB" id="5A1Y">
    <property type="method" value="EM"/>
    <property type="resolution" value="21.00 A"/>
    <property type="chains" value="A/B/I/J/R=1-181"/>
</dbReference>
<dbReference type="PDB" id="5NZR">
    <property type="method" value="EM"/>
    <property type="resolution" value="9.20 A"/>
    <property type="chains" value="F/M/R=1-181"/>
</dbReference>
<dbReference type="PDB" id="5NZS">
    <property type="method" value="EM"/>
    <property type="resolution" value="10.10 A"/>
    <property type="chains" value="F/M/R=1-181"/>
</dbReference>
<dbReference type="PDB" id="5NZT">
    <property type="method" value="EM"/>
    <property type="resolution" value="17.00 A"/>
    <property type="chains" value="F/J/M/R=1-181"/>
</dbReference>
<dbReference type="PDB" id="5NZU">
    <property type="method" value="EM"/>
    <property type="resolution" value="15.00 A"/>
    <property type="chains" value="F/M/R=1-181"/>
</dbReference>
<dbReference type="PDB" id="5NZV">
    <property type="method" value="EM"/>
    <property type="resolution" value="17.30 A"/>
    <property type="chains" value="F/M/P/R/T=1-181"/>
</dbReference>
<dbReference type="PDB" id="7URO">
    <property type="method" value="EM"/>
    <property type="resolution" value="4.20 A"/>
    <property type="chains" value="B/D=1-181"/>
</dbReference>
<dbReference type="PDB" id="8S5C">
    <property type="method" value="EM"/>
    <property type="resolution" value="3.10 A"/>
    <property type="chains" value="A=1-181"/>
</dbReference>
<dbReference type="PDB" id="8S5D">
    <property type="method" value="EM"/>
    <property type="resolution" value="3.79 A"/>
    <property type="chains" value="A=1-181"/>
</dbReference>
<dbReference type="PDB" id="8S5E">
    <property type="method" value="EM"/>
    <property type="resolution" value="3.10 A"/>
    <property type="chains" value="A/B/C/D/E/F/G=1-181"/>
</dbReference>
<dbReference type="PDBsum" id="2K5U"/>
<dbReference type="PDBsum" id="2KSQ"/>
<dbReference type="PDBsum" id="3TJZ"/>
<dbReference type="PDBsum" id="4Q66"/>
<dbReference type="PDBsum" id="5A1U"/>
<dbReference type="PDBsum" id="5A1V"/>
<dbReference type="PDBsum" id="5A1W"/>
<dbReference type="PDBsum" id="5A1X"/>
<dbReference type="PDBsum" id="5A1Y"/>
<dbReference type="PDBsum" id="5NZR"/>
<dbReference type="PDBsum" id="5NZS"/>
<dbReference type="PDBsum" id="5NZT"/>
<dbReference type="PDBsum" id="5NZU"/>
<dbReference type="PDBsum" id="5NZV"/>
<dbReference type="PDBsum" id="7URO"/>
<dbReference type="PDBsum" id="8S5C"/>
<dbReference type="PDBsum" id="8S5D"/>
<dbReference type="PDBsum" id="8S5E"/>
<dbReference type="BMRB" id="P11076"/>
<dbReference type="EMDB" id="EMD-19731"/>
<dbReference type="EMDB" id="EMD-19732"/>
<dbReference type="EMDB" id="EMD-19733"/>
<dbReference type="EMDB" id="EMD-2985"/>
<dbReference type="EMDB" id="EMD-2986"/>
<dbReference type="EMDB" id="EMD-2987"/>
<dbReference type="EMDB" id="EMD-2988"/>
<dbReference type="EMDB" id="EMD-2989"/>
<dbReference type="EMDB" id="EMD-3720"/>
<dbReference type="EMDB" id="EMD-3721"/>
<dbReference type="EMDB" id="EMD-3722"/>
<dbReference type="EMDB" id="EMD-3723"/>
<dbReference type="EMDB" id="EMD-3724"/>
<dbReference type="SMR" id="P11076"/>
<dbReference type="BioGRID" id="31853">
    <property type="interactions" value="411"/>
</dbReference>
<dbReference type="DIP" id="DIP-2213N"/>
<dbReference type="FunCoup" id="P11076">
    <property type="interactions" value="1277"/>
</dbReference>
<dbReference type="IntAct" id="P11076">
    <property type="interactions" value="77"/>
</dbReference>
<dbReference type="MINT" id="P11076"/>
<dbReference type="STRING" id="4932.YDL192W"/>
<dbReference type="iPTMnet" id="P11076"/>
<dbReference type="PaxDb" id="4932-YDL192W"/>
<dbReference type="PeptideAtlas" id="P11076"/>
<dbReference type="TopDownProteomics" id="P11076"/>
<dbReference type="EnsemblFungi" id="YDL192W_mRNA">
    <property type="protein sequence ID" value="YDL192W"/>
    <property type="gene ID" value="YDL192W"/>
</dbReference>
<dbReference type="GeneID" id="851335"/>
<dbReference type="KEGG" id="sce:YDL192W"/>
<dbReference type="AGR" id="SGD:S000002351"/>
<dbReference type="SGD" id="S000002351">
    <property type="gene designation" value="ARF1"/>
</dbReference>
<dbReference type="VEuPathDB" id="FungiDB:YDL192W"/>
<dbReference type="eggNOG" id="KOG0070">
    <property type="taxonomic scope" value="Eukaryota"/>
</dbReference>
<dbReference type="GeneTree" id="ENSGT00940000165468"/>
<dbReference type="HOGENOM" id="CLU_040729_9_3_1"/>
<dbReference type="InParanoid" id="P11076"/>
<dbReference type="OMA" id="IRQRHWF"/>
<dbReference type="OrthoDB" id="2011769at2759"/>
<dbReference type="BioCyc" id="YEAST:G3O-29577-MONOMER"/>
<dbReference type="Reactome" id="R-SCE-1660499">
    <property type="pathway name" value="Synthesis of PIPs at the plasma membrane"/>
</dbReference>
<dbReference type="Reactome" id="R-SCE-1660514">
    <property type="pathway name" value="Synthesis of PIPs at the Golgi membrane"/>
</dbReference>
<dbReference type="Reactome" id="R-SCE-199992">
    <property type="pathway name" value="trans-Golgi Network Vesicle Budding"/>
</dbReference>
<dbReference type="Reactome" id="R-SCE-5620916">
    <property type="pathway name" value="VxPx cargo-targeting to cilium"/>
</dbReference>
<dbReference type="Reactome" id="R-SCE-6807878">
    <property type="pathway name" value="COPI-mediated anterograde transport"/>
</dbReference>
<dbReference type="Reactome" id="R-SCE-6811434">
    <property type="pathway name" value="COPI-dependent Golgi-to-ER retrograde traffic"/>
</dbReference>
<dbReference type="Reactome" id="R-SCE-6811438">
    <property type="pathway name" value="Intra-Golgi traffic"/>
</dbReference>
<dbReference type="BioGRID-ORCS" id="851335">
    <property type="hits" value="0 hits in 10 CRISPR screens"/>
</dbReference>
<dbReference type="EvolutionaryTrace" id="P11076"/>
<dbReference type="PRO" id="PR:P11076"/>
<dbReference type="Proteomes" id="UP000002311">
    <property type="component" value="Chromosome IV"/>
</dbReference>
<dbReference type="RNAct" id="P11076">
    <property type="molecule type" value="protein"/>
</dbReference>
<dbReference type="GO" id="GO:0005737">
    <property type="term" value="C:cytoplasm"/>
    <property type="evidence" value="ECO:0000318"/>
    <property type="project" value="GO_Central"/>
</dbReference>
<dbReference type="GO" id="GO:0005829">
    <property type="term" value="C:cytosol"/>
    <property type="evidence" value="ECO:0007005"/>
    <property type="project" value="SGD"/>
</dbReference>
<dbReference type="GO" id="GO:0005794">
    <property type="term" value="C:Golgi apparatus"/>
    <property type="evidence" value="ECO:0000314"/>
    <property type="project" value="SGD"/>
</dbReference>
<dbReference type="GO" id="GO:0044232">
    <property type="term" value="C:organelle membrane contact site"/>
    <property type="evidence" value="ECO:0000314"/>
    <property type="project" value="SGD"/>
</dbReference>
<dbReference type="GO" id="GO:0005886">
    <property type="term" value="C:plasma membrane"/>
    <property type="evidence" value="ECO:0000318"/>
    <property type="project" value="GO_Central"/>
</dbReference>
<dbReference type="GO" id="GO:0005525">
    <property type="term" value="F:GTP binding"/>
    <property type="evidence" value="ECO:0000318"/>
    <property type="project" value="GO_Central"/>
</dbReference>
<dbReference type="GO" id="GO:0003924">
    <property type="term" value="F:GTPase activity"/>
    <property type="evidence" value="ECO:0000314"/>
    <property type="project" value="SGD"/>
</dbReference>
<dbReference type="GO" id="GO:0006888">
    <property type="term" value="P:endoplasmic reticulum to Golgi vesicle-mediated transport"/>
    <property type="evidence" value="ECO:0000314"/>
    <property type="project" value="SGD"/>
</dbReference>
<dbReference type="GO" id="GO:0006893">
    <property type="term" value="P:Golgi to plasma membrane transport"/>
    <property type="evidence" value="ECO:0000316"/>
    <property type="project" value="SGD"/>
</dbReference>
<dbReference type="GO" id="GO:0048193">
    <property type="term" value="P:Golgi vesicle transport"/>
    <property type="evidence" value="ECO:0000315"/>
    <property type="project" value="UniProtKB"/>
</dbReference>
<dbReference type="GO" id="GO:0006886">
    <property type="term" value="P:intracellular protein transport"/>
    <property type="evidence" value="ECO:0000318"/>
    <property type="project" value="GO_Central"/>
</dbReference>
<dbReference type="GO" id="GO:0016236">
    <property type="term" value="P:macroautophagy"/>
    <property type="evidence" value="ECO:0000315"/>
    <property type="project" value="SGD"/>
</dbReference>
<dbReference type="GO" id="GO:0090141">
    <property type="term" value="P:positive regulation of mitochondrial fission"/>
    <property type="evidence" value="ECO:0000316"/>
    <property type="project" value="SGD"/>
</dbReference>
<dbReference type="GO" id="GO:0010636">
    <property type="term" value="P:positive regulation of mitochondrial fusion"/>
    <property type="evidence" value="ECO:0000316"/>
    <property type="project" value="SGD"/>
</dbReference>
<dbReference type="GO" id="GO:1903292">
    <property type="term" value="P:protein localization to Golgi membrane"/>
    <property type="evidence" value="ECO:0000314"/>
    <property type="project" value="SGD"/>
</dbReference>
<dbReference type="GO" id="GO:0019217">
    <property type="term" value="P:regulation of fatty acid metabolic process"/>
    <property type="evidence" value="ECO:0000316"/>
    <property type="project" value="SGD"/>
</dbReference>
<dbReference type="GO" id="GO:1903358">
    <property type="term" value="P:regulation of Golgi organization"/>
    <property type="evidence" value="ECO:0000314"/>
    <property type="project" value="SGD"/>
</dbReference>
<dbReference type="GO" id="GO:0016192">
    <property type="term" value="P:vesicle-mediated transport"/>
    <property type="evidence" value="ECO:0000318"/>
    <property type="project" value="GO_Central"/>
</dbReference>
<dbReference type="CDD" id="cd04150">
    <property type="entry name" value="Arf1_5_like"/>
    <property type="match status" value="1"/>
</dbReference>
<dbReference type="FunFam" id="3.40.50.300:FF:000024">
    <property type="entry name" value="ADP-ribosylation factor 1"/>
    <property type="match status" value="1"/>
</dbReference>
<dbReference type="Gene3D" id="3.40.50.300">
    <property type="entry name" value="P-loop containing nucleotide triphosphate hydrolases"/>
    <property type="match status" value="1"/>
</dbReference>
<dbReference type="InterPro" id="IPR045872">
    <property type="entry name" value="Arf1-5-like"/>
</dbReference>
<dbReference type="InterPro" id="IPR027417">
    <property type="entry name" value="P-loop_NTPase"/>
</dbReference>
<dbReference type="InterPro" id="IPR005225">
    <property type="entry name" value="Small_GTP-bd"/>
</dbReference>
<dbReference type="InterPro" id="IPR024156">
    <property type="entry name" value="Small_GTPase_ARF"/>
</dbReference>
<dbReference type="InterPro" id="IPR006689">
    <property type="entry name" value="Small_GTPase_ARF/SAR"/>
</dbReference>
<dbReference type="NCBIfam" id="TIGR00231">
    <property type="entry name" value="small_GTP"/>
    <property type="match status" value="1"/>
</dbReference>
<dbReference type="PANTHER" id="PTHR11711">
    <property type="entry name" value="ADP RIBOSYLATION FACTOR-RELATED"/>
    <property type="match status" value="1"/>
</dbReference>
<dbReference type="Pfam" id="PF00025">
    <property type="entry name" value="Arf"/>
    <property type="match status" value="1"/>
</dbReference>
<dbReference type="PRINTS" id="PR00328">
    <property type="entry name" value="SAR1GTPBP"/>
</dbReference>
<dbReference type="SMART" id="SM00177">
    <property type="entry name" value="ARF"/>
    <property type="match status" value="1"/>
</dbReference>
<dbReference type="SMART" id="SM00175">
    <property type="entry name" value="RAB"/>
    <property type="match status" value="1"/>
</dbReference>
<dbReference type="SMART" id="SM00178">
    <property type="entry name" value="SAR"/>
    <property type="match status" value="1"/>
</dbReference>
<dbReference type="SUPFAM" id="SSF52540">
    <property type="entry name" value="P-loop containing nucleoside triphosphate hydrolases"/>
    <property type="match status" value="1"/>
</dbReference>
<dbReference type="PROSITE" id="PS51417">
    <property type="entry name" value="ARF"/>
    <property type="match status" value="1"/>
</dbReference>
<evidence type="ECO:0000250" key="1">
    <source>
        <dbReference type="UniProtKB" id="P84077"/>
    </source>
</evidence>
<evidence type="ECO:0000269" key="2">
    <source>
    </source>
</evidence>
<evidence type="ECO:0000269" key="3">
    <source>
    </source>
</evidence>
<evidence type="ECO:0000269" key="4">
    <source>
    </source>
</evidence>
<evidence type="ECO:0000269" key="5">
    <source>
    </source>
</evidence>
<evidence type="ECO:0000269" key="6">
    <source>
    </source>
</evidence>
<evidence type="ECO:0000269" key="7">
    <source>
    </source>
</evidence>
<evidence type="ECO:0000269" key="8">
    <source>
    </source>
</evidence>
<evidence type="ECO:0000269" key="9">
    <source>
    </source>
</evidence>
<evidence type="ECO:0000305" key="10"/>
<evidence type="ECO:0007744" key="11">
    <source>
        <dbReference type="PDB" id="2K5U"/>
    </source>
</evidence>
<evidence type="ECO:0007744" key="12">
    <source>
        <dbReference type="PDB" id="2KSQ"/>
    </source>
</evidence>
<evidence type="ECO:0007744" key="13">
    <source>
        <dbReference type="PDB" id="3TJZ"/>
    </source>
</evidence>
<evidence type="ECO:0007744" key="14">
    <source>
    </source>
</evidence>
<evidence type="ECO:0007829" key="15">
    <source>
        <dbReference type="PDB" id="2K5U"/>
    </source>
</evidence>
<evidence type="ECO:0007829" key="16">
    <source>
        <dbReference type="PDB" id="2KSQ"/>
    </source>
</evidence>
<evidence type="ECO:0007829" key="17">
    <source>
        <dbReference type="PDB" id="3TJZ"/>
    </source>
</evidence>
<organism>
    <name type="scientific">Saccharomyces cerevisiae (strain ATCC 204508 / S288c)</name>
    <name type="common">Baker's yeast</name>
    <dbReference type="NCBI Taxonomy" id="559292"/>
    <lineage>
        <taxon>Eukaryota</taxon>
        <taxon>Fungi</taxon>
        <taxon>Dikarya</taxon>
        <taxon>Ascomycota</taxon>
        <taxon>Saccharomycotina</taxon>
        <taxon>Saccharomycetes</taxon>
        <taxon>Saccharomycetales</taxon>
        <taxon>Saccharomycetaceae</taxon>
        <taxon>Saccharomyces</taxon>
    </lineage>
</organism>
<sequence length="181" mass="20529">MGLFASKLFSNLFGNKEMRILMVGLDGAGKTTVLYKLKLGEVITTIPTIGFNVETVQYKNISFTVWDVGGQDRIRSLWRHYYRNTEGVIFVVDSNDRSRIGEAREVMQRMLNEDELRNAAWLVFANKQDLPEAMSAAEITEKLGLHSIRNRPWFIQATCATSGEGLYEGLEWLSNSLKNST</sequence>
<reference key="1">
    <citation type="journal article" date="1988" name="Proc. Natl. Acad. Sci. U.S.A.">
        <title>Sequences of the bovine and yeast ADP-ribosylation factor and comparison to other GTP-binding proteins.</title>
        <authorList>
            <person name="Sewell J."/>
            <person name="Kahn R.A."/>
        </authorList>
    </citation>
    <scope>NUCLEOTIDE SEQUENCE [GENOMIC DNA]</scope>
</reference>
<reference key="2">
    <citation type="journal article" date="1996" name="Yeast">
        <title>The sequence of 23 kb surrounding the SNF3 locus on the left arm of yeast chromosome IV reveals the location of five known genes and characterizes at least six new open reading frames including putative genes for ribosomal protein L35 and a sugar transport protein.</title>
        <authorList>
            <person name="Verhasselt P."/>
            <person name="Voet M."/>
            <person name="Mathys J."/>
            <person name="Volckaert G."/>
        </authorList>
    </citation>
    <scope>NUCLEOTIDE SEQUENCE [GENOMIC DNA]</scope>
    <source>
        <strain>ATCC 96604 / S288c / FY1679</strain>
    </source>
</reference>
<reference key="3">
    <citation type="journal article" date="1997" name="Nature">
        <title>The nucleotide sequence of Saccharomyces cerevisiae chromosome IV.</title>
        <authorList>
            <person name="Jacq C."/>
            <person name="Alt-Moerbe J."/>
            <person name="Andre B."/>
            <person name="Arnold W."/>
            <person name="Bahr A."/>
            <person name="Ballesta J.P.G."/>
            <person name="Bargues M."/>
            <person name="Baron L."/>
            <person name="Becker A."/>
            <person name="Biteau N."/>
            <person name="Bloecker H."/>
            <person name="Blugeon C."/>
            <person name="Boskovic J."/>
            <person name="Brandt P."/>
            <person name="Brueckner M."/>
            <person name="Buitrago M.J."/>
            <person name="Coster F."/>
            <person name="Delaveau T."/>
            <person name="del Rey F."/>
            <person name="Dujon B."/>
            <person name="Eide L.G."/>
            <person name="Garcia-Cantalejo J.M."/>
            <person name="Goffeau A."/>
            <person name="Gomez-Peris A."/>
            <person name="Granotier C."/>
            <person name="Hanemann V."/>
            <person name="Hankeln T."/>
            <person name="Hoheisel J.D."/>
            <person name="Jaeger W."/>
            <person name="Jimenez A."/>
            <person name="Jonniaux J.-L."/>
            <person name="Kraemer C."/>
            <person name="Kuester H."/>
            <person name="Laamanen P."/>
            <person name="Legros Y."/>
            <person name="Louis E.J."/>
            <person name="Moeller-Rieker S."/>
            <person name="Monnet A."/>
            <person name="Moro M."/>
            <person name="Mueller-Auer S."/>
            <person name="Nussbaumer B."/>
            <person name="Paricio N."/>
            <person name="Paulin L."/>
            <person name="Perea J."/>
            <person name="Perez-Alonso M."/>
            <person name="Perez-Ortin J.E."/>
            <person name="Pohl T.M."/>
            <person name="Prydz H."/>
            <person name="Purnelle B."/>
            <person name="Rasmussen S.W."/>
            <person name="Remacha M.A."/>
            <person name="Revuelta J.L."/>
            <person name="Rieger M."/>
            <person name="Salom D."/>
            <person name="Saluz H.P."/>
            <person name="Saiz J.E."/>
            <person name="Saren A.-M."/>
            <person name="Schaefer M."/>
            <person name="Scharfe M."/>
            <person name="Schmidt E.R."/>
            <person name="Schneider C."/>
            <person name="Scholler P."/>
            <person name="Schwarz S."/>
            <person name="Soler-Mira A."/>
            <person name="Urrestarazu L.A."/>
            <person name="Verhasselt P."/>
            <person name="Vissers S."/>
            <person name="Voet M."/>
            <person name="Volckaert G."/>
            <person name="Wagner G."/>
            <person name="Wambutt R."/>
            <person name="Wedler E."/>
            <person name="Wedler H."/>
            <person name="Woelfl S."/>
            <person name="Harris D.E."/>
            <person name="Bowman S."/>
            <person name="Brown D."/>
            <person name="Churcher C.M."/>
            <person name="Connor R."/>
            <person name="Dedman K."/>
            <person name="Gentles S."/>
            <person name="Hamlin N."/>
            <person name="Hunt S."/>
            <person name="Jones L."/>
            <person name="McDonald S."/>
            <person name="Murphy L.D."/>
            <person name="Niblett D."/>
            <person name="Odell C."/>
            <person name="Oliver K."/>
            <person name="Rajandream M.A."/>
            <person name="Richards C."/>
            <person name="Shore L."/>
            <person name="Walsh S.V."/>
            <person name="Barrell B.G."/>
            <person name="Dietrich F.S."/>
            <person name="Mulligan J.T."/>
            <person name="Allen E."/>
            <person name="Araujo R."/>
            <person name="Aviles E."/>
            <person name="Berno A."/>
            <person name="Carpenter J."/>
            <person name="Chen E."/>
            <person name="Cherry J.M."/>
            <person name="Chung E."/>
            <person name="Duncan M."/>
            <person name="Hunicke-Smith S."/>
            <person name="Hyman R.W."/>
            <person name="Komp C."/>
            <person name="Lashkari D."/>
            <person name="Lew H."/>
            <person name="Lin D."/>
            <person name="Mosedale D."/>
            <person name="Nakahara K."/>
            <person name="Namath A."/>
            <person name="Oefner P."/>
            <person name="Oh C."/>
            <person name="Petel F.X."/>
            <person name="Roberts D."/>
            <person name="Schramm S."/>
            <person name="Schroeder M."/>
            <person name="Shogren T."/>
            <person name="Shroff N."/>
            <person name="Winant A."/>
            <person name="Yelton M.A."/>
            <person name="Botstein D."/>
            <person name="Davis R.W."/>
            <person name="Johnston M."/>
            <person name="Andrews S."/>
            <person name="Brinkman R."/>
            <person name="Cooper J."/>
            <person name="Ding H."/>
            <person name="Du Z."/>
            <person name="Favello A."/>
            <person name="Fulton L."/>
            <person name="Gattung S."/>
            <person name="Greco T."/>
            <person name="Hallsworth K."/>
            <person name="Hawkins J."/>
            <person name="Hillier L.W."/>
            <person name="Jier M."/>
            <person name="Johnson D."/>
            <person name="Johnston L."/>
            <person name="Kirsten J."/>
            <person name="Kucaba T."/>
            <person name="Langston Y."/>
            <person name="Latreille P."/>
            <person name="Le T."/>
            <person name="Mardis E."/>
            <person name="Menezes S."/>
            <person name="Miller N."/>
            <person name="Nhan M."/>
            <person name="Pauley A."/>
            <person name="Peluso D."/>
            <person name="Rifkin L."/>
            <person name="Riles L."/>
            <person name="Taich A."/>
            <person name="Trevaskis E."/>
            <person name="Vignati D."/>
            <person name="Wilcox L."/>
            <person name="Wohldman P."/>
            <person name="Vaudin M."/>
            <person name="Wilson R."/>
            <person name="Waterston R."/>
            <person name="Albermann K."/>
            <person name="Hani J."/>
            <person name="Heumann K."/>
            <person name="Kleine K."/>
            <person name="Mewes H.-W."/>
            <person name="Zollner A."/>
            <person name="Zaccaria P."/>
        </authorList>
    </citation>
    <scope>NUCLEOTIDE SEQUENCE [LARGE SCALE GENOMIC DNA]</scope>
    <source>
        <strain>ATCC 204508 / S288c</strain>
    </source>
</reference>
<reference key="4">
    <citation type="journal article" date="2014" name="G3 (Bethesda)">
        <title>The reference genome sequence of Saccharomyces cerevisiae: Then and now.</title>
        <authorList>
            <person name="Engel S.R."/>
            <person name="Dietrich F.S."/>
            <person name="Fisk D.G."/>
            <person name="Binkley G."/>
            <person name="Balakrishnan R."/>
            <person name="Costanzo M.C."/>
            <person name="Dwight S.S."/>
            <person name="Hitz B.C."/>
            <person name="Karra K."/>
            <person name="Nash R.S."/>
            <person name="Weng S."/>
            <person name="Wong E.D."/>
            <person name="Lloyd P."/>
            <person name="Skrzypek M.S."/>
            <person name="Miyasato S.R."/>
            <person name="Simison M."/>
            <person name="Cherry J.M."/>
        </authorList>
    </citation>
    <scope>GENOME REANNOTATION</scope>
    <source>
        <strain>ATCC 204508 / S288c</strain>
    </source>
</reference>
<reference key="5">
    <citation type="journal article" date="1999" name="J. Cell Biol.">
        <title>Role for Drs2p, a P-type ATPase and potential aminophospholipid translocase, in yeast late Golgi function.</title>
        <authorList>
            <person name="Chen C.Y."/>
            <person name="Ingram M.F."/>
            <person name="Rosal P.H."/>
            <person name="Graham T.R."/>
        </authorList>
    </citation>
    <scope>DISRUPTION PHENOTYPE</scope>
</reference>
<reference key="6">
    <citation type="journal article" date="2003" name="Nature">
        <title>Global analysis of protein expression in yeast.</title>
        <authorList>
            <person name="Ghaemmaghami S."/>
            <person name="Huh W.-K."/>
            <person name="Bower K."/>
            <person name="Howson R.W."/>
            <person name="Belle A."/>
            <person name="Dephoure N."/>
            <person name="O'Shea E.K."/>
            <person name="Weissman J.S."/>
        </authorList>
    </citation>
    <scope>LEVEL OF PROTEIN EXPRESSION [LARGE SCALE ANALYSIS]</scope>
</reference>
<reference key="7">
    <citation type="journal article" date="2004" name="J. Cell Biol.">
        <title>The GTPase Arf1p and the ER to Golgi cargo receptor Erv14p cooperate to recruit the golgin Rud3p to the cis-Golgi.</title>
        <authorList>
            <person name="Gillingham A.K."/>
            <person name="Tong A.H.Y."/>
            <person name="Boone C."/>
            <person name="Munro S."/>
        </authorList>
    </citation>
    <scope>INTERACTION WITH RUD3</scope>
    <scope>SUBCELLULAR LOCATION</scope>
</reference>
<reference key="8">
    <citation type="journal article" date="2004" name="Mol. Biol. Cell">
        <title>Arf1p provides an unexpected link between COPI vesicles and mRNA in Saccharomyces cerevisiae.</title>
        <authorList>
            <person name="Trautwein M."/>
            <person name="Dengjel J."/>
            <person name="Schirle M."/>
            <person name="Spang A."/>
        </authorList>
    </citation>
    <scope>FUNCTION IN MRNA TRANSPORT</scope>
    <scope>INTERACTION WITH ARF1</scope>
</reference>
<reference key="9">
    <citation type="journal article" date="2006" name="Traffic">
        <title>Roles for the Drs2p-Cdc50p complex in protein transport and phosphatidylserine asymmetry of the yeast plasma membrane.</title>
        <authorList>
            <person name="Chen S."/>
            <person name="Wang J."/>
            <person name="Muthusamy B.P."/>
            <person name="Liu K."/>
            <person name="Zare S."/>
            <person name="Andersen R.J."/>
            <person name="Graham T.R."/>
        </authorList>
    </citation>
    <scope>DISRUPTION PHENOTYPE</scope>
</reference>
<reference key="10">
    <citation type="journal article" date="2012" name="Proteomics">
        <title>Sites of ubiquitin attachment in Saccharomyces cerevisiae.</title>
        <authorList>
            <person name="Starita L.M."/>
            <person name="Lo R.S."/>
            <person name="Eng J.K."/>
            <person name="von Haller P.D."/>
            <person name="Fields S."/>
        </authorList>
    </citation>
    <scope>UBIQUITINATION [LARGE SCALE ANALYSIS] AT LYS-127</scope>
    <scope>IDENTIFICATION BY MASS SPECTROMETRY [LARGE SCALE ANALYSIS]</scope>
</reference>
<reference key="11">
    <citation type="journal article" date="2021" name="Int. J. Mol. Sci.">
        <title>The GTPase Arf1 Is a Determinant of Yeast Vps13 Localization to the Golgi Apparatus.</title>
        <authorList>
            <person name="Kolakowski D."/>
            <person name="Rzepnikowska W."/>
            <person name="Kaniak-Golik A."/>
            <person name="Zoladek T."/>
            <person name="Kaminska J."/>
        </authorList>
    </citation>
    <scope>FUNCTION</scope>
    <scope>INTERACTION WITH VPS13</scope>
</reference>
<reference evidence="11" key="12">
    <citation type="journal article" date="2009" name="Structure">
        <title>Structure and membrane interaction of myristoylated ARF1.</title>
        <authorList>
            <person name="Liu Y."/>
            <person name="Kahn R.A."/>
            <person name="Prestegard J.H."/>
        </authorList>
    </citation>
    <scope>STRUCTURE BY NMR OF 2-181 IN COMPLEX WITH GDP</scope>
    <scope>MYRISTOYLATION AT GLY-2</scope>
</reference>
<reference evidence="12" key="13">
    <citation type="journal article" date="2010" name="Nat. Struct. Mol. Biol.">
        <title>Dynamic structure of membrane-anchored Arf*GTP.</title>
        <authorList>
            <person name="Liu Y."/>
            <person name="Kahn R.A."/>
            <person name="Prestegard J.H."/>
        </authorList>
    </citation>
    <scope>STRUCTURE BY NMR OF 2-181 IN COMPLEX WITH GTP</scope>
    <scope>MYRISTOYLATION AT GLY-2</scope>
</reference>
<reference evidence="13" key="14">
    <citation type="journal article" date="2012" name="Cell">
        <title>A structure-based mechanism for Arf1-dependent recruitment of coatomer to membranes.</title>
        <authorList>
            <person name="Yu X."/>
            <person name="Breitman M."/>
            <person name="Goldberg J."/>
        </authorList>
    </citation>
    <scope>X-RAY CRYSTALLOGRAPHY (2.90 ANGSTROMS) OF 18-181</scope>
</reference>
<keyword id="KW-0002">3D-structure</keyword>
<keyword id="KW-0931">ER-Golgi transport</keyword>
<keyword id="KW-0333">Golgi apparatus</keyword>
<keyword id="KW-0342">GTP-binding</keyword>
<keyword id="KW-0378">Hydrolase</keyword>
<keyword id="KW-1017">Isopeptide bond</keyword>
<keyword id="KW-0449">Lipoprotein</keyword>
<keyword id="KW-0519">Myristate</keyword>
<keyword id="KW-0547">Nucleotide-binding</keyword>
<keyword id="KW-0653">Protein transport</keyword>
<keyword id="KW-1185">Reference proteome</keyword>
<keyword id="KW-0813">Transport</keyword>
<keyword id="KW-0832">Ubl conjugation</keyword>
<feature type="initiator methionine" description="Removed">
    <location>
        <position position="1"/>
    </location>
</feature>
<feature type="chain" id="PRO_0000207418" description="ADP-ribosylation factor 1">
    <location>
        <begin position="2"/>
        <end position="181"/>
    </location>
</feature>
<feature type="binding site" evidence="8">
    <location>
        <begin position="25"/>
        <end position="32"/>
    </location>
    <ligand>
        <name>GTP</name>
        <dbReference type="ChEBI" id="CHEBI:37565"/>
    </ligand>
</feature>
<feature type="binding site" evidence="8">
    <location>
        <position position="48"/>
    </location>
    <ligand>
        <name>GTP</name>
        <dbReference type="ChEBI" id="CHEBI:37565"/>
    </ligand>
</feature>
<feature type="binding site" evidence="8">
    <location>
        <position position="70"/>
    </location>
    <ligand>
        <name>GTP</name>
        <dbReference type="ChEBI" id="CHEBI:37565"/>
    </ligand>
</feature>
<feature type="binding site" evidence="8">
    <location>
        <begin position="126"/>
        <end position="129"/>
    </location>
    <ligand>
        <name>GTP</name>
        <dbReference type="ChEBI" id="CHEBI:37565"/>
    </ligand>
</feature>
<feature type="binding site" evidence="8">
    <location>
        <begin position="160"/>
        <end position="161"/>
    </location>
    <ligand>
        <name>GTP</name>
        <dbReference type="ChEBI" id="CHEBI:37565"/>
    </ligand>
</feature>
<feature type="lipid moiety-binding region" description="N-myristoyl glycine" evidence="7 8">
    <location>
        <position position="2"/>
    </location>
</feature>
<feature type="cross-link" description="Glycyl lysine isopeptide (Lys-Gly) (interchain with G-Cter in ubiquitin)" evidence="14">
    <location>
        <position position="127"/>
    </location>
</feature>
<feature type="strand" evidence="15">
    <location>
        <begin position="4"/>
        <end position="8"/>
    </location>
</feature>
<feature type="helix" evidence="16">
    <location>
        <begin position="11"/>
        <end position="13"/>
    </location>
</feature>
<feature type="turn" evidence="16">
    <location>
        <begin position="14"/>
        <end position="16"/>
    </location>
</feature>
<feature type="strand" evidence="17">
    <location>
        <begin position="19"/>
        <end position="23"/>
    </location>
</feature>
<feature type="turn" evidence="16">
    <location>
        <begin position="26"/>
        <end position="28"/>
    </location>
</feature>
<feature type="helix" evidence="17">
    <location>
        <begin position="30"/>
        <end position="39"/>
    </location>
</feature>
<feature type="strand" evidence="15">
    <location>
        <begin position="43"/>
        <end position="45"/>
    </location>
</feature>
<feature type="strand" evidence="17">
    <location>
        <begin position="49"/>
        <end position="58"/>
    </location>
</feature>
<feature type="strand" evidence="17">
    <location>
        <begin position="61"/>
        <end position="68"/>
    </location>
</feature>
<feature type="helix" evidence="17">
    <location>
        <begin position="72"/>
        <end position="75"/>
    </location>
</feature>
<feature type="helix" evidence="17">
    <location>
        <begin position="76"/>
        <end position="78"/>
    </location>
</feature>
<feature type="helix" evidence="17">
    <location>
        <begin position="79"/>
        <end position="82"/>
    </location>
</feature>
<feature type="strand" evidence="17">
    <location>
        <begin position="86"/>
        <end position="93"/>
    </location>
</feature>
<feature type="strand" evidence="17">
    <location>
        <begin position="97"/>
        <end position="99"/>
    </location>
</feature>
<feature type="helix" evidence="17">
    <location>
        <begin position="100"/>
        <end position="110"/>
    </location>
</feature>
<feature type="helix" evidence="17">
    <location>
        <begin position="114"/>
        <end position="116"/>
    </location>
</feature>
<feature type="strand" evidence="17">
    <location>
        <begin position="120"/>
        <end position="126"/>
    </location>
</feature>
<feature type="helix" evidence="17">
    <location>
        <begin position="136"/>
        <end position="143"/>
    </location>
</feature>
<feature type="helix" evidence="17">
    <location>
        <begin position="145"/>
        <end position="147"/>
    </location>
</feature>
<feature type="strand" evidence="17">
    <location>
        <begin position="153"/>
        <end position="157"/>
    </location>
</feature>
<feature type="turn" evidence="17">
    <location>
        <begin position="160"/>
        <end position="163"/>
    </location>
</feature>
<feature type="helix" evidence="17">
    <location>
        <begin position="166"/>
        <end position="174"/>
    </location>
</feature>
<feature type="turn" evidence="16">
    <location>
        <begin position="178"/>
        <end position="180"/>
    </location>
</feature>
<accession>P11076</accession>
<accession>D6VRG1</accession>
<proteinExistence type="evidence at protein level"/>